<evidence type="ECO:0000250" key="1"/>
<evidence type="ECO:0000255" key="2"/>
<evidence type="ECO:0000256" key="3">
    <source>
        <dbReference type="SAM" id="MobiDB-lite"/>
    </source>
</evidence>
<evidence type="ECO:0000305" key="4"/>
<protein>
    <recommendedName>
        <fullName>Cytochrome c oxidase subunit 2</fullName>
        <ecNumber>7.1.1.9</ecNumber>
    </recommendedName>
    <alternativeName>
        <fullName>Cytochrome aa3 subunit 2</fullName>
    </alternativeName>
    <alternativeName>
        <fullName>Cytochrome c oxidase polypeptide II</fullName>
    </alternativeName>
    <alternativeName>
        <fullName>Mtb92</fullName>
    </alternativeName>
</protein>
<gene>
    <name type="primary">ctaC</name>
    <name type="ordered locus">MT2256</name>
</gene>
<proteinExistence type="inferred from homology"/>
<accession>P9WP68</accession>
<accession>L0TBL3</accession>
<accession>O30514</accession>
<accession>P63854</accession>
<accession>Q10375</accession>
<keyword id="KW-1003">Cell membrane</keyword>
<keyword id="KW-0186">Copper</keyword>
<keyword id="KW-0249">Electron transport</keyword>
<keyword id="KW-0349">Heme</keyword>
<keyword id="KW-0408">Iron</keyword>
<keyword id="KW-0472">Membrane</keyword>
<keyword id="KW-0479">Metal-binding</keyword>
<keyword id="KW-1185">Reference proteome</keyword>
<keyword id="KW-0679">Respiratory chain</keyword>
<keyword id="KW-0732">Signal</keyword>
<keyword id="KW-1278">Translocase</keyword>
<keyword id="KW-0812">Transmembrane</keyword>
<keyword id="KW-1133">Transmembrane helix</keyword>
<keyword id="KW-0813">Transport</keyword>
<reference key="1">
    <citation type="journal article" date="2002" name="J. Bacteriol.">
        <title>Whole-genome comparison of Mycobacterium tuberculosis clinical and laboratory strains.</title>
        <authorList>
            <person name="Fleischmann R.D."/>
            <person name="Alland D."/>
            <person name="Eisen J.A."/>
            <person name="Carpenter L."/>
            <person name="White O."/>
            <person name="Peterson J.D."/>
            <person name="DeBoy R.T."/>
            <person name="Dodson R.J."/>
            <person name="Gwinn M.L."/>
            <person name="Haft D.H."/>
            <person name="Hickey E.K."/>
            <person name="Kolonay J.F."/>
            <person name="Nelson W.C."/>
            <person name="Umayam L.A."/>
            <person name="Ermolaeva M.D."/>
            <person name="Salzberg S.L."/>
            <person name="Delcher A."/>
            <person name="Utterback T.R."/>
            <person name="Weidman J.F."/>
            <person name="Khouri H.M."/>
            <person name="Gill J."/>
            <person name="Mikula A."/>
            <person name="Bishai W."/>
            <person name="Jacobs W.R. Jr."/>
            <person name="Venter J.C."/>
            <person name="Fraser C.M."/>
        </authorList>
    </citation>
    <scope>NUCLEOTIDE SEQUENCE [LARGE SCALE GENOMIC DNA]</scope>
    <source>
        <strain>CDC 1551 / Oshkosh</strain>
    </source>
</reference>
<comment type="function">
    <text evidence="1">Subunits I and II form the functional core of the enzyme complex. Electrons originating in cytochrome c are transferred via heme a and Cu(A) to the binuclear center formed by heme a3 and Cu(B) (By similarity).</text>
</comment>
<comment type="catalytic activity">
    <reaction>
        <text>4 Fe(II)-[cytochrome c] + O2 + 8 H(+)(in) = 4 Fe(III)-[cytochrome c] + 2 H2O + 4 H(+)(out)</text>
        <dbReference type="Rhea" id="RHEA:11436"/>
        <dbReference type="Rhea" id="RHEA-COMP:10350"/>
        <dbReference type="Rhea" id="RHEA-COMP:14399"/>
        <dbReference type="ChEBI" id="CHEBI:15377"/>
        <dbReference type="ChEBI" id="CHEBI:15378"/>
        <dbReference type="ChEBI" id="CHEBI:15379"/>
        <dbReference type="ChEBI" id="CHEBI:29033"/>
        <dbReference type="ChEBI" id="CHEBI:29034"/>
        <dbReference type="EC" id="7.1.1.9"/>
    </reaction>
</comment>
<comment type="cofactor">
    <cofactor evidence="1">
        <name>Cu cation</name>
        <dbReference type="ChEBI" id="CHEBI:23378"/>
    </cofactor>
    <text evidence="1">Binds a copper A center.</text>
</comment>
<comment type="cofactor">
    <cofactor evidence="1">
        <name>heme</name>
        <dbReference type="ChEBI" id="CHEBI:30413"/>
    </cofactor>
</comment>
<comment type="subcellular location">
    <subcellularLocation>
        <location evidence="4">Cell membrane</location>
        <topology evidence="4">Multi-pass membrane protein</topology>
    </subcellularLocation>
</comment>
<comment type="similarity">
    <text evidence="4">Belongs to the cytochrome c oxidase subunit 2 family.</text>
</comment>
<organism>
    <name type="scientific">Mycobacterium tuberculosis (strain CDC 1551 / Oshkosh)</name>
    <dbReference type="NCBI Taxonomy" id="83331"/>
    <lineage>
        <taxon>Bacteria</taxon>
        <taxon>Bacillati</taxon>
        <taxon>Actinomycetota</taxon>
        <taxon>Actinomycetes</taxon>
        <taxon>Mycobacteriales</taxon>
        <taxon>Mycobacteriaceae</taxon>
        <taxon>Mycobacterium</taxon>
        <taxon>Mycobacterium tuberculosis complex</taxon>
    </lineage>
</organism>
<feature type="signal peptide" evidence="2">
    <location>
        <begin position="1"/>
        <end position="41"/>
    </location>
</feature>
<feature type="chain" id="PRO_0000427004" description="Cytochrome c oxidase subunit 2">
    <location>
        <begin position="42"/>
        <end position="363"/>
    </location>
</feature>
<feature type="transmembrane region" description="Helical" evidence="2">
    <location>
        <begin position="71"/>
        <end position="91"/>
    </location>
</feature>
<feature type="transmembrane region" description="Helical" evidence="2">
    <location>
        <begin position="118"/>
        <end position="138"/>
    </location>
</feature>
<feature type="region of interest" description="Disordered" evidence="3">
    <location>
        <begin position="1"/>
        <end position="23"/>
    </location>
</feature>
<feature type="binding site" evidence="2">
    <location>
        <position position="254"/>
    </location>
    <ligand>
        <name>Cu cation</name>
        <dbReference type="ChEBI" id="CHEBI:23378"/>
        <label>A</label>
    </ligand>
</feature>
<feature type="binding site" evidence="2">
    <location>
        <position position="295"/>
    </location>
    <ligand>
        <name>Cu cation</name>
        <dbReference type="ChEBI" id="CHEBI:23378"/>
        <label>A</label>
    </ligand>
</feature>
<feature type="binding site" evidence="2">
    <location>
        <position position="299"/>
    </location>
    <ligand>
        <name>Cu cation</name>
        <dbReference type="ChEBI" id="CHEBI:23378"/>
        <label>A</label>
    </ligand>
</feature>
<feature type="binding site" evidence="2">
    <location>
        <position position="303"/>
    </location>
    <ligand>
        <name>Cu cation</name>
        <dbReference type="ChEBI" id="CHEBI:23378"/>
        <label>A</label>
    </ligand>
</feature>
<name>COX2_MYCTO</name>
<sequence>MTPRGPGRLQRLSQCRPQRGSGGPARGLRQLALAAMLGALAVTVSGCSWSEALGIGWPEGITPEAHLNRELWIGAVIASLAVGVIVWGLIFWSAVFHRKKNTDTELPRQFGYNMPLELVLTVIPFLIISVLFYFTVVVQEKMLQIAKDPEVVIDITSFQWNWKFGYQRVNFKDGTLTYDGADPERKRAMVSKPEGKDKYGEELVGPVRGLNTEDRTYLNFDKVETLGTSTEIPVLVLPSGKRIEFQMASADVIHAFWVPEFLFKRDVMPNPVANNSVNVFQIEEITKTGAFVGHCAEMCGTYHSMMNFEVRVVTPNDFKAYLQQRIDGKTNAEALRAINQPPLAVTTHPFDTRRGELAPQPVG</sequence>
<dbReference type="EC" id="7.1.1.9"/>
<dbReference type="EMBL" id="AE000516">
    <property type="protein sequence ID" value="AAK46542.1"/>
    <property type="molecule type" value="Genomic_DNA"/>
</dbReference>
<dbReference type="PIR" id="A70785">
    <property type="entry name" value="A70785"/>
</dbReference>
<dbReference type="RefSeq" id="WP_003899214.1">
    <property type="nucleotide sequence ID" value="NZ_KK341227.1"/>
</dbReference>
<dbReference type="SMR" id="P9WP68"/>
<dbReference type="KEGG" id="mtc:MT2256"/>
<dbReference type="PATRIC" id="fig|83331.31.peg.2431"/>
<dbReference type="HOGENOM" id="CLU_036876_3_1_11"/>
<dbReference type="Proteomes" id="UP000001020">
    <property type="component" value="Chromosome"/>
</dbReference>
<dbReference type="GO" id="GO:0005886">
    <property type="term" value="C:plasma membrane"/>
    <property type="evidence" value="ECO:0007669"/>
    <property type="project" value="UniProtKB-SubCell"/>
</dbReference>
<dbReference type="GO" id="GO:0005507">
    <property type="term" value="F:copper ion binding"/>
    <property type="evidence" value="ECO:0007669"/>
    <property type="project" value="InterPro"/>
</dbReference>
<dbReference type="GO" id="GO:0004129">
    <property type="term" value="F:cytochrome-c oxidase activity"/>
    <property type="evidence" value="ECO:0007669"/>
    <property type="project" value="UniProtKB-EC"/>
</dbReference>
<dbReference type="GO" id="GO:0042773">
    <property type="term" value="P:ATP synthesis coupled electron transport"/>
    <property type="evidence" value="ECO:0007669"/>
    <property type="project" value="TreeGrafter"/>
</dbReference>
<dbReference type="FunFam" id="1.10.287.90:FF:000003">
    <property type="entry name" value="Cytochrome C oxidase subunit II"/>
    <property type="match status" value="1"/>
</dbReference>
<dbReference type="FunFam" id="2.60.40.420:FF:000092">
    <property type="entry name" value="Cytochrome C oxidase subunit II"/>
    <property type="match status" value="1"/>
</dbReference>
<dbReference type="Gene3D" id="1.10.287.90">
    <property type="match status" value="1"/>
</dbReference>
<dbReference type="Gene3D" id="2.60.40.420">
    <property type="entry name" value="Cupredoxins - blue copper proteins"/>
    <property type="match status" value="1"/>
</dbReference>
<dbReference type="InterPro" id="IPR045187">
    <property type="entry name" value="CcO_II"/>
</dbReference>
<dbReference type="InterPro" id="IPR002429">
    <property type="entry name" value="CcO_II-like_C"/>
</dbReference>
<dbReference type="InterPro" id="IPR001505">
    <property type="entry name" value="Copper_CuA"/>
</dbReference>
<dbReference type="InterPro" id="IPR008972">
    <property type="entry name" value="Cupredoxin"/>
</dbReference>
<dbReference type="InterPro" id="IPR036257">
    <property type="entry name" value="Cyt_c_oxidase_su2_TM_sf"/>
</dbReference>
<dbReference type="PANTHER" id="PTHR22888:SF9">
    <property type="entry name" value="CYTOCHROME C OXIDASE SUBUNIT 2"/>
    <property type="match status" value="1"/>
</dbReference>
<dbReference type="PANTHER" id="PTHR22888">
    <property type="entry name" value="CYTOCHROME C OXIDASE, SUBUNIT II"/>
    <property type="match status" value="1"/>
</dbReference>
<dbReference type="Pfam" id="PF00116">
    <property type="entry name" value="COX2"/>
    <property type="match status" value="1"/>
</dbReference>
<dbReference type="SUPFAM" id="SSF49503">
    <property type="entry name" value="Cupredoxins"/>
    <property type="match status" value="1"/>
</dbReference>
<dbReference type="SUPFAM" id="SSF81464">
    <property type="entry name" value="Cytochrome c oxidase subunit II-like, transmembrane region"/>
    <property type="match status" value="1"/>
</dbReference>
<dbReference type="PROSITE" id="PS00078">
    <property type="entry name" value="COX2"/>
    <property type="match status" value="1"/>
</dbReference>
<dbReference type="PROSITE" id="PS50857">
    <property type="entry name" value="COX2_CUA"/>
    <property type="match status" value="1"/>
</dbReference>